<name>Y048_ALCBS</name>
<feature type="chain" id="PRO_0000261911" description="Nucleotide-binding protein ABO_0048">
    <location>
        <begin position="1"/>
        <end position="161"/>
    </location>
</feature>
<keyword id="KW-0547">Nucleotide-binding</keyword>
<keyword id="KW-1185">Reference proteome</keyword>
<sequence>MPSFDIVSEIDEVALRHAVENANRELSTRFDFRGVEASIAQNGLAVTLKTESDFQVRQLEELFTKACLKQNISAAGADKPEELEHSGKTFSLTLTFRQGIDQPVAKQIVKLIKESKIKVQASIQGDQVRVNGKKRDDLQAVMALLRESKIETPLQFNNFRD</sequence>
<gene>
    <name type="ordered locus">ABO_0048</name>
</gene>
<reference key="1">
    <citation type="journal article" date="2006" name="Nat. Biotechnol.">
        <title>Genome sequence of the ubiquitous hydrocarbon-degrading marine bacterium Alcanivorax borkumensis.</title>
        <authorList>
            <person name="Schneiker S."/>
            <person name="Martins dos Santos V.A.P."/>
            <person name="Bartels D."/>
            <person name="Bekel T."/>
            <person name="Brecht M."/>
            <person name="Buhrmester J."/>
            <person name="Chernikova T.N."/>
            <person name="Denaro R."/>
            <person name="Ferrer M."/>
            <person name="Gertler C."/>
            <person name="Goesmann A."/>
            <person name="Golyshina O.V."/>
            <person name="Kaminski F."/>
            <person name="Khachane A.N."/>
            <person name="Lang S."/>
            <person name="Linke B."/>
            <person name="McHardy A.C."/>
            <person name="Meyer F."/>
            <person name="Nechitaylo T."/>
            <person name="Puehler A."/>
            <person name="Regenhardt D."/>
            <person name="Rupp O."/>
            <person name="Sabirova J.S."/>
            <person name="Selbitschka W."/>
            <person name="Yakimov M.M."/>
            <person name="Timmis K.N."/>
            <person name="Vorhoelter F.-J."/>
            <person name="Weidner S."/>
            <person name="Kaiser O."/>
            <person name="Golyshin P.N."/>
        </authorList>
    </citation>
    <scope>NUCLEOTIDE SEQUENCE [LARGE SCALE GENOMIC DNA]</scope>
    <source>
        <strain>ATCC 700651 / DSM 11573 / NCIMB 13689 / SK2</strain>
    </source>
</reference>
<comment type="function">
    <text evidence="1">Nucleotide-binding protein.</text>
</comment>
<comment type="similarity">
    <text evidence="1">Belongs to the YajQ family.</text>
</comment>
<protein>
    <recommendedName>
        <fullName evidence="1">Nucleotide-binding protein ABO_0048</fullName>
    </recommendedName>
</protein>
<proteinExistence type="inferred from homology"/>
<dbReference type="EMBL" id="AM286690">
    <property type="protein sequence ID" value="CAL15496.1"/>
    <property type="molecule type" value="Genomic_DNA"/>
</dbReference>
<dbReference type="RefSeq" id="WP_011587346.1">
    <property type="nucleotide sequence ID" value="NC_008260.1"/>
</dbReference>
<dbReference type="SMR" id="Q0VTG6"/>
<dbReference type="STRING" id="393595.ABO_0048"/>
<dbReference type="KEGG" id="abo:ABO_0048"/>
<dbReference type="eggNOG" id="COG1666">
    <property type="taxonomic scope" value="Bacteria"/>
</dbReference>
<dbReference type="HOGENOM" id="CLU_099839_1_0_6"/>
<dbReference type="OrthoDB" id="9801447at2"/>
<dbReference type="Proteomes" id="UP000008871">
    <property type="component" value="Chromosome"/>
</dbReference>
<dbReference type="GO" id="GO:0005829">
    <property type="term" value="C:cytosol"/>
    <property type="evidence" value="ECO:0007669"/>
    <property type="project" value="TreeGrafter"/>
</dbReference>
<dbReference type="GO" id="GO:0000166">
    <property type="term" value="F:nucleotide binding"/>
    <property type="evidence" value="ECO:0007669"/>
    <property type="project" value="TreeGrafter"/>
</dbReference>
<dbReference type="CDD" id="cd11740">
    <property type="entry name" value="YajQ_like"/>
    <property type="match status" value="1"/>
</dbReference>
<dbReference type="FunFam" id="3.30.70.860:FF:000001">
    <property type="entry name" value="UPF0234 protein YajQ"/>
    <property type="match status" value="1"/>
</dbReference>
<dbReference type="Gene3D" id="3.30.70.860">
    <property type="match status" value="1"/>
</dbReference>
<dbReference type="Gene3D" id="3.30.70.990">
    <property type="entry name" value="YajQ-like, domain 2"/>
    <property type="match status" value="1"/>
</dbReference>
<dbReference type="HAMAP" id="MF_00632">
    <property type="entry name" value="YajQ"/>
    <property type="match status" value="1"/>
</dbReference>
<dbReference type="InterPro" id="IPR007551">
    <property type="entry name" value="DUF520"/>
</dbReference>
<dbReference type="InterPro" id="IPR035571">
    <property type="entry name" value="UPF0234-like_C"/>
</dbReference>
<dbReference type="InterPro" id="IPR035570">
    <property type="entry name" value="UPF0234_N"/>
</dbReference>
<dbReference type="InterPro" id="IPR036183">
    <property type="entry name" value="YajQ-like_sf"/>
</dbReference>
<dbReference type="NCBIfam" id="NF003819">
    <property type="entry name" value="PRK05412.1"/>
    <property type="match status" value="1"/>
</dbReference>
<dbReference type="PANTHER" id="PTHR30476">
    <property type="entry name" value="UPF0234 PROTEIN YAJQ"/>
    <property type="match status" value="1"/>
</dbReference>
<dbReference type="PANTHER" id="PTHR30476:SF0">
    <property type="entry name" value="UPF0234 PROTEIN YAJQ"/>
    <property type="match status" value="1"/>
</dbReference>
<dbReference type="Pfam" id="PF04461">
    <property type="entry name" value="DUF520"/>
    <property type="match status" value="1"/>
</dbReference>
<dbReference type="SUPFAM" id="SSF89963">
    <property type="entry name" value="YajQ-like"/>
    <property type="match status" value="2"/>
</dbReference>
<evidence type="ECO:0000255" key="1">
    <source>
        <dbReference type="HAMAP-Rule" id="MF_00632"/>
    </source>
</evidence>
<organism>
    <name type="scientific">Alcanivorax borkumensis (strain ATCC 700651 / DSM 11573 / NCIMB 13689 / SK2)</name>
    <dbReference type="NCBI Taxonomy" id="393595"/>
    <lineage>
        <taxon>Bacteria</taxon>
        <taxon>Pseudomonadati</taxon>
        <taxon>Pseudomonadota</taxon>
        <taxon>Gammaproteobacteria</taxon>
        <taxon>Oceanospirillales</taxon>
        <taxon>Alcanivoracaceae</taxon>
        <taxon>Alcanivorax</taxon>
    </lineage>
</organism>
<accession>Q0VTG6</accession>